<dbReference type="EMBL" id="BX640418">
    <property type="protein sequence ID" value="CAE42771.1"/>
    <property type="molecule type" value="Genomic_DNA"/>
</dbReference>
<dbReference type="RefSeq" id="NP_881126.1">
    <property type="nucleotide sequence ID" value="NC_002929.2"/>
</dbReference>
<dbReference type="RefSeq" id="WP_010930959.1">
    <property type="nucleotide sequence ID" value="NZ_CP039022.1"/>
</dbReference>
<dbReference type="SMR" id="Q7VVY2"/>
<dbReference type="STRING" id="257313.BP2499"/>
<dbReference type="PaxDb" id="257313-BP2499"/>
<dbReference type="GeneID" id="69602400"/>
<dbReference type="KEGG" id="bpe:BP2499"/>
<dbReference type="PATRIC" id="fig|257313.5.peg.2697"/>
<dbReference type="eggNOG" id="COG0443">
    <property type="taxonomic scope" value="Bacteria"/>
</dbReference>
<dbReference type="HOGENOM" id="CLU_005965_2_1_4"/>
<dbReference type="Proteomes" id="UP000002676">
    <property type="component" value="Chromosome"/>
</dbReference>
<dbReference type="GO" id="GO:0005524">
    <property type="term" value="F:ATP binding"/>
    <property type="evidence" value="ECO:0007669"/>
    <property type="project" value="UniProtKB-UniRule"/>
</dbReference>
<dbReference type="GO" id="GO:0140662">
    <property type="term" value="F:ATP-dependent protein folding chaperone"/>
    <property type="evidence" value="ECO:0007669"/>
    <property type="project" value="InterPro"/>
</dbReference>
<dbReference type="GO" id="GO:0051082">
    <property type="term" value="F:unfolded protein binding"/>
    <property type="evidence" value="ECO:0007669"/>
    <property type="project" value="InterPro"/>
</dbReference>
<dbReference type="CDD" id="cd10234">
    <property type="entry name" value="ASKHA_NBD_HSP70_DnaK-like"/>
    <property type="match status" value="1"/>
</dbReference>
<dbReference type="FunFam" id="2.60.34.10:FF:000014">
    <property type="entry name" value="Chaperone protein DnaK HSP70"/>
    <property type="match status" value="1"/>
</dbReference>
<dbReference type="FunFam" id="1.20.1270.10:FF:000001">
    <property type="entry name" value="Molecular chaperone DnaK"/>
    <property type="match status" value="1"/>
</dbReference>
<dbReference type="FunFam" id="3.30.420.40:FF:000004">
    <property type="entry name" value="Molecular chaperone DnaK"/>
    <property type="match status" value="1"/>
</dbReference>
<dbReference type="FunFam" id="3.90.640.10:FF:000003">
    <property type="entry name" value="Molecular chaperone DnaK"/>
    <property type="match status" value="1"/>
</dbReference>
<dbReference type="Gene3D" id="1.20.1270.10">
    <property type="match status" value="1"/>
</dbReference>
<dbReference type="Gene3D" id="3.30.420.40">
    <property type="match status" value="2"/>
</dbReference>
<dbReference type="Gene3D" id="3.90.640.10">
    <property type="entry name" value="Actin, Chain A, domain 4"/>
    <property type="match status" value="1"/>
</dbReference>
<dbReference type="Gene3D" id="2.60.34.10">
    <property type="entry name" value="Substrate Binding Domain Of DNAk, Chain A, domain 1"/>
    <property type="match status" value="1"/>
</dbReference>
<dbReference type="HAMAP" id="MF_00332">
    <property type="entry name" value="DnaK"/>
    <property type="match status" value="1"/>
</dbReference>
<dbReference type="InterPro" id="IPR043129">
    <property type="entry name" value="ATPase_NBD"/>
</dbReference>
<dbReference type="InterPro" id="IPR012725">
    <property type="entry name" value="Chaperone_DnaK"/>
</dbReference>
<dbReference type="InterPro" id="IPR018181">
    <property type="entry name" value="Heat_shock_70_CS"/>
</dbReference>
<dbReference type="InterPro" id="IPR029048">
    <property type="entry name" value="HSP70_C_sf"/>
</dbReference>
<dbReference type="InterPro" id="IPR029047">
    <property type="entry name" value="HSP70_peptide-bd_sf"/>
</dbReference>
<dbReference type="InterPro" id="IPR013126">
    <property type="entry name" value="Hsp_70_fam"/>
</dbReference>
<dbReference type="NCBIfam" id="NF001413">
    <property type="entry name" value="PRK00290.1"/>
    <property type="match status" value="1"/>
</dbReference>
<dbReference type="NCBIfam" id="NF003520">
    <property type="entry name" value="PRK05183.1"/>
    <property type="match status" value="1"/>
</dbReference>
<dbReference type="NCBIfam" id="TIGR02350">
    <property type="entry name" value="prok_dnaK"/>
    <property type="match status" value="1"/>
</dbReference>
<dbReference type="PANTHER" id="PTHR19375">
    <property type="entry name" value="HEAT SHOCK PROTEIN 70KDA"/>
    <property type="match status" value="1"/>
</dbReference>
<dbReference type="Pfam" id="PF00012">
    <property type="entry name" value="HSP70"/>
    <property type="match status" value="1"/>
</dbReference>
<dbReference type="PRINTS" id="PR00301">
    <property type="entry name" value="HEATSHOCK70"/>
</dbReference>
<dbReference type="SUPFAM" id="SSF53067">
    <property type="entry name" value="Actin-like ATPase domain"/>
    <property type="match status" value="2"/>
</dbReference>
<dbReference type="SUPFAM" id="SSF100934">
    <property type="entry name" value="Heat shock protein 70kD (HSP70), C-terminal subdomain"/>
    <property type="match status" value="1"/>
</dbReference>
<dbReference type="SUPFAM" id="SSF100920">
    <property type="entry name" value="Heat shock protein 70kD (HSP70), peptide-binding domain"/>
    <property type="match status" value="1"/>
</dbReference>
<dbReference type="PROSITE" id="PS00297">
    <property type="entry name" value="HSP70_1"/>
    <property type="match status" value="1"/>
</dbReference>
<dbReference type="PROSITE" id="PS00329">
    <property type="entry name" value="HSP70_2"/>
    <property type="match status" value="1"/>
</dbReference>
<dbReference type="PROSITE" id="PS01036">
    <property type="entry name" value="HSP70_3"/>
    <property type="match status" value="1"/>
</dbReference>
<organism>
    <name type="scientific">Bordetella pertussis (strain Tohama I / ATCC BAA-589 / NCTC 13251)</name>
    <dbReference type="NCBI Taxonomy" id="257313"/>
    <lineage>
        <taxon>Bacteria</taxon>
        <taxon>Pseudomonadati</taxon>
        <taxon>Pseudomonadota</taxon>
        <taxon>Betaproteobacteria</taxon>
        <taxon>Burkholderiales</taxon>
        <taxon>Alcaligenaceae</taxon>
        <taxon>Bordetella</taxon>
    </lineage>
</organism>
<gene>
    <name evidence="1" type="primary">dnaK</name>
    <name type="ordered locus">BP2499</name>
</gene>
<sequence length="641" mass="69649">MSKIIGIDLGTTNSCVAVLDGGQVKIIENAEGARTTPSIVAYMDDGETLVGAPAKRQAVANPKNTLYAVKRLIGRKFDEKAVQKDIDLMPYSIVKADNGDAWVEVRGKKLAPPQVSAEVLRKMKKTAEDYLGEEVTEAVITVPAYFNDSQRQATKDAGRIAGLEVKRIINEPTAAALAFGLDKTEKGDRKIVVYDLGGGTFDVSIIEIADVDGEMQFEVLSTNGDTFLGGEDFDQRIIDYIISEFKKEQGVDLSKDVLALQRLKEAAEKAKIELSSSQQTEINLPYITADASGPKHLNLKITRAKLEALVEELIERTIEPCRVAIKDAGVKVSDIDDVILVGGMTRMPKVQDKVKEFFGREPRKDVNPDEAVAAGAAIQGSVLSGERKDVLLLDVTPLSLGIETLGGVMTKMIQKNTTIPTRYSQTFSTADDNQPAVTIKVFQGEREIAAGNKGLGEFNLEGIPPAPRGLPQIEVTFDIDANGILHVSAKDKGTGKENKITIKANSGLSEDEIQRMVKDAEANAEEDHRLAELAQARNQADALVHATRKSLTEYGEKLEAAEKESIEAAIKDLEDILKTGDKAEIDAKVEALSTASQKLGEKMYADMQAQQQAQQQQAADNAKPVDDNVVDADFKEVKRDQ</sequence>
<reference key="1">
    <citation type="journal article" date="2003" name="Nat. Genet.">
        <title>Comparative analysis of the genome sequences of Bordetella pertussis, Bordetella parapertussis and Bordetella bronchiseptica.</title>
        <authorList>
            <person name="Parkhill J."/>
            <person name="Sebaihia M."/>
            <person name="Preston A."/>
            <person name="Murphy L.D."/>
            <person name="Thomson N.R."/>
            <person name="Harris D.E."/>
            <person name="Holden M.T.G."/>
            <person name="Churcher C.M."/>
            <person name="Bentley S.D."/>
            <person name="Mungall K.L."/>
            <person name="Cerdeno-Tarraga A.-M."/>
            <person name="Temple L."/>
            <person name="James K.D."/>
            <person name="Harris B."/>
            <person name="Quail M.A."/>
            <person name="Achtman M."/>
            <person name="Atkin R."/>
            <person name="Baker S."/>
            <person name="Basham D."/>
            <person name="Bason N."/>
            <person name="Cherevach I."/>
            <person name="Chillingworth T."/>
            <person name="Collins M."/>
            <person name="Cronin A."/>
            <person name="Davis P."/>
            <person name="Doggett J."/>
            <person name="Feltwell T."/>
            <person name="Goble A."/>
            <person name="Hamlin N."/>
            <person name="Hauser H."/>
            <person name="Holroyd S."/>
            <person name="Jagels K."/>
            <person name="Leather S."/>
            <person name="Moule S."/>
            <person name="Norberczak H."/>
            <person name="O'Neil S."/>
            <person name="Ormond D."/>
            <person name="Price C."/>
            <person name="Rabbinowitsch E."/>
            <person name="Rutter S."/>
            <person name="Sanders M."/>
            <person name="Saunders D."/>
            <person name="Seeger K."/>
            <person name="Sharp S."/>
            <person name="Simmonds M."/>
            <person name="Skelton J."/>
            <person name="Squares R."/>
            <person name="Squares S."/>
            <person name="Stevens K."/>
            <person name="Unwin L."/>
            <person name="Whitehead S."/>
            <person name="Barrell B.G."/>
            <person name="Maskell D.J."/>
        </authorList>
    </citation>
    <scope>NUCLEOTIDE SEQUENCE [LARGE SCALE GENOMIC DNA]</scope>
    <source>
        <strain>Tohama I / ATCC BAA-589 / NCTC 13251</strain>
    </source>
</reference>
<comment type="function">
    <text evidence="1">Acts as a chaperone.</text>
</comment>
<comment type="induction">
    <text evidence="1">By stress conditions e.g. heat shock.</text>
</comment>
<comment type="similarity">
    <text evidence="1">Belongs to the heat shock protein 70 family.</text>
</comment>
<accession>Q7VVY2</accession>
<feature type="chain" id="PRO_0000078427" description="Chaperone protein DnaK">
    <location>
        <begin position="1"/>
        <end position="641"/>
    </location>
</feature>
<feature type="region of interest" description="Disordered" evidence="2">
    <location>
        <begin position="606"/>
        <end position="641"/>
    </location>
</feature>
<feature type="compositionally biased region" description="Low complexity" evidence="2">
    <location>
        <begin position="608"/>
        <end position="619"/>
    </location>
</feature>
<feature type="compositionally biased region" description="Basic and acidic residues" evidence="2">
    <location>
        <begin position="632"/>
        <end position="641"/>
    </location>
</feature>
<feature type="modified residue" description="Phosphothreonine; by autocatalysis" evidence="1">
    <location>
        <position position="200"/>
    </location>
</feature>
<evidence type="ECO:0000255" key="1">
    <source>
        <dbReference type="HAMAP-Rule" id="MF_00332"/>
    </source>
</evidence>
<evidence type="ECO:0000256" key="2">
    <source>
        <dbReference type="SAM" id="MobiDB-lite"/>
    </source>
</evidence>
<protein>
    <recommendedName>
        <fullName evidence="1">Chaperone protein DnaK</fullName>
    </recommendedName>
    <alternativeName>
        <fullName evidence="1">HSP70</fullName>
    </alternativeName>
    <alternativeName>
        <fullName evidence="1">Heat shock 70 kDa protein</fullName>
    </alternativeName>
    <alternativeName>
        <fullName evidence="1">Heat shock protein 70</fullName>
    </alternativeName>
</protein>
<proteinExistence type="inferred from homology"/>
<name>DNAK_BORPE</name>
<keyword id="KW-0067">ATP-binding</keyword>
<keyword id="KW-0143">Chaperone</keyword>
<keyword id="KW-0547">Nucleotide-binding</keyword>
<keyword id="KW-0597">Phosphoprotein</keyword>
<keyword id="KW-1185">Reference proteome</keyword>
<keyword id="KW-0346">Stress response</keyword>